<protein>
    <recommendedName>
        <fullName evidence="1">Small ribosomal subunit protein uS8</fullName>
    </recommendedName>
    <alternativeName>
        <fullName evidence="2">30S ribosomal protein S8</fullName>
    </alternativeName>
</protein>
<accession>Q0BNR3</accession>
<sequence>MSMQDPIADMFTRIRNGLSAEKEFVSVPFSKIKMEIANFLVNEGYIKSCSKGTTSMGHPSIEIELKYHAGAPVIEMIKRVSRPSLRIYKSHADLPKVYGGYGVAIVSTSKGLVSDRKARDLGVGGEIIGYVA</sequence>
<keyword id="KW-0687">Ribonucleoprotein</keyword>
<keyword id="KW-0689">Ribosomal protein</keyword>
<keyword id="KW-0694">RNA-binding</keyword>
<keyword id="KW-0699">rRNA-binding</keyword>
<organism>
    <name type="scientific">Francisella tularensis subsp. holarctica (strain OSU18)</name>
    <dbReference type="NCBI Taxonomy" id="393011"/>
    <lineage>
        <taxon>Bacteria</taxon>
        <taxon>Pseudomonadati</taxon>
        <taxon>Pseudomonadota</taxon>
        <taxon>Gammaproteobacteria</taxon>
        <taxon>Thiotrichales</taxon>
        <taxon>Francisellaceae</taxon>
        <taxon>Francisella</taxon>
    </lineage>
</organism>
<gene>
    <name evidence="1" type="primary">rpsH</name>
    <name type="ordered locus">FTH_0245</name>
</gene>
<evidence type="ECO:0000255" key="1">
    <source>
        <dbReference type="HAMAP-Rule" id="MF_01302"/>
    </source>
</evidence>
<evidence type="ECO:0000305" key="2"/>
<feature type="chain" id="PRO_0000290839" description="Small ribosomal subunit protein uS8">
    <location>
        <begin position="1"/>
        <end position="132"/>
    </location>
</feature>
<dbReference type="EMBL" id="CP000437">
    <property type="protein sequence ID" value="ABI82271.1"/>
    <property type="molecule type" value="Genomic_DNA"/>
</dbReference>
<dbReference type="RefSeq" id="WP_003014356.1">
    <property type="nucleotide sequence ID" value="NC_017463.1"/>
</dbReference>
<dbReference type="SMR" id="Q0BNR3"/>
<dbReference type="GeneID" id="75264247"/>
<dbReference type="KEGG" id="fth:FTH_0245"/>
<dbReference type="GO" id="GO:1990904">
    <property type="term" value="C:ribonucleoprotein complex"/>
    <property type="evidence" value="ECO:0007669"/>
    <property type="project" value="UniProtKB-KW"/>
</dbReference>
<dbReference type="GO" id="GO:0005840">
    <property type="term" value="C:ribosome"/>
    <property type="evidence" value="ECO:0007669"/>
    <property type="project" value="UniProtKB-KW"/>
</dbReference>
<dbReference type="GO" id="GO:0019843">
    <property type="term" value="F:rRNA binding"/>
    <property type="evidence" value="ECO:0007669"/>
    <property type="project" value="UniProtKB-UniRule"/>
</dbReference>
<dbReference type="GO" id="GO:0003735">
    <property type="term" value="F:structural constituent of ribosome"/>
    <property type="evidence" value="ECO:0007669"/>
    <property type="project" value="InterPro"/>
</dbReference>
<dbReference type="GO" id="GO:0006412">
    <property type="term" value="P:translation"/>
    <property type="evidence" value="ECO:0007669"/>
    <property type="project" value="UniProtKB-UniRule"/>
</dbReference>
<dbReference type="FunFam" id="3.30.1490.10:FF:000001">
    <property type="entry name" value="30S ribosomal protein S8"/>
    <property type="match status" value="1"/>
</dbReference>
<dbReference type="Gene3D" id="3.30.1370.30">
    <property type="match status" value="1"/>
</dbReference>
<dbReference type="Gene3D" id="3.30.1490.10">
    <property type="match status" value="1"/>
</dbReference>
<dbReference type="HAMAP" id="MF_01302_B">
    <property type="entry name" value="Ribosomal_uS8_B"/>
    <property type="match status" value="1"/>
</dbReference>
<dbReference type="InterPro" id="IPR000630">
    <property type="entry name" value="Ribosomal_uS8"/>
</dbReference>
<dbReference type="InterPro" id="IPR047863">
    <property type="entry name" value="Ribosomal_uS8_CS"/>
</dbReference>
<dbReference type="InterPro" id="IPR035987">
    <property type="entry name" value="Ribosomal_uS8_sf"/>
</dbReference>
<dbReference type="NCBIfam" id="NF001109">
    <property type="entry name" value="PRK00136.1"/>
    <property type="match status" value="1"/>
</dbReference>
<dbReference type="PANTHER" id="PTHR11758">
    <property type="entry name" value="40S RIBOSOMAL PROTEIN S15A"/>
    <property type="match status" value="1"/>
</dbReference>
<dbReference type="Pfam" id="PF00410">
    <property type="entry name" value="Ribosomal_S8"/>
    <property type="match status" value="1"/>
</dbReference>
<dbReference type="SUPFAM" id="SSF56047">
    <property type="entry name" value="Ribosomal protein S8"/>
    <property type="match status" value="1"/>
</dbReference>
<dbReference type="PROSITE" id="PS00053">
    <property type="entry name" value="RIBOSOMAL_S8"/>
    <property type="match status" value="1"/>
</dbReference>
<name>RS8_FRATO</name>
<reference key="1">
    <citation type="journal article" date="2006" name="J. Bacteriol.">
        <title>Chromosome rearrangement and diversification of Francisella tularensis revealed by the type B (OSU18) genome sequence.</title>
        <authorList>
            <person name="Petrosino J.F."/>
            <person name="Xiang Q."/>
            <person name="Karpathy S.E."/>
            <person name="Jiang H."/>
            <person name="Yerrapragada S."/>
            <person name="Liu Y."/>
            <person name="Gioia J."/>
            <person name="Hemphill L."/>
            <person name="Gonzalez A."/>
            <person name="Raghavan T.M."/>
            <person name="Uzman A."/>
            <person name="Fox G.E."/>
            <person name="Highlander S."/>
            <person name="Reichard M."/>
            <person name="Morton R.J."/>
            <person name="Clinkenbeard K.D."/>
            <person name="Weinstock G.M."/>
        </authorList>
    </citation>
    <scope>NUCLEOTIDE SEQUENCE [LARGE SCALE GENOMIC DNA]</scope>
    <source>
        <strain>OSU18</strain>
    </source>
</reference>
<proteinExistence type="inferred from homology"/>
<comment type="function">
    <text evidence="1">One of the primary rRNA binding proteins, it binds directly to 16S rRNA central domain where it helps coordinate assembly of the platform of the 30S subunit.</text>
</comment>
<comment type="subunit">
    <text evidence="1">Part of the 30S ribosomal subunit. Contacts proteins S5 and S12.</text>
</comment>
<comment type="similarity">
    <text evidence="1">Belongs to the universal ribosomal protein uS8 family.</text>
</comment>